<name>YNFA_SALHS</name>
<keyword id="KW-0997">Cell inner membrane</keyword>
<keyword id="KW-1003">Cell membrane</keyword>
<keyword id="KW-0472">Membrane</keyword>
<keyword id="KW-0812">Transmembrane</keyword>
<keyword id="KW-1133">Transmembrane helix</keyword>
<proteinExistence type="inferred from homology"/>
<comment type="subcellular location">
    <subcellularLocation>
        <location evidence="1">Cell inner membrane</location>
        <topology evidence="1">Multi-pass membrane protein</topology>
    </subcellularLocation>
</comment>
<comment type="similarity">
    <text evidence="1">Belongs to the UPF0060 family.</text>
</comment>
<sequence length="108" mass="11948">MLKTTLLFFVTALCEIIGCFLPWLWLKRGASVWWLLPAAASLALFVWLLTLHPAASGRVYAAYGGVYVCTALLWLRVVDGVRLTVYDWCGALIALCGMLIIVVGWGRT</sequence>
<evidence type="ECO:0000255" key="1">
    <source>
        <dbReference type="HAMAP-Rule" id="MF_00010"/>
    </source>
</evidence>
<accession>B4THT6</accession>
<gene>
    <name evidence="1" type="primary">ynfA</name>
    <name type="ordered locus">SeHA_C1674</name>
</gene>
<feature type="chain" id="PRO_1000089258" description="UPF0060 membrane protein YnfA">
    <location>
        <begin position="1"/>
        <end position="108"/>
    </location>
</feature>
<feature type="topological domain" description="Periplasmic" evidence="1">
    <location>
        <begin position="1"/>
        <end position="5"/>
    </location>
</feature>
<feature type="transmembrane region" description="Helical" evidence="1">
    <location>
        <begin position="6"/>
        <end position="26"/>
    </location>
</feature>
<feature type="topological domain" description="Cytoplasmic" evidence="1">
    <location>
        <begin position="27"/>
        <end position="30"/>
    </location>
</feature>
<feature type="transmembrane region" description="Helical" evidence="1">
    <location>
        <begin position="31"/>
        <end position="51"/>
    </location>
</feature>
<feature type="topological domain" description="Periplasmic" evidence="1">
    <location>
        <begin position="52"/>
        <end position="60"/>
    </location>
</feature>
<feature type="transmembrane region" description="Helical" evidence="1">
    <location>
        <begin position="61"/>
        <end position="81"/>
    </location>
</feature>
<feature type="topological domain" description="Cytoplasmic" evidence="1">
    <location>
        <begin position="82"/>
        <end position="84"/>
    </location>
</feature>
<feature type="transmembrane region" description="Helical" evidence="1">
    <location>
        <begin position="85"/>
        <end position="105"/>
    </location>
</feature>
<feature type="topological domain" description="Periplasmic" evidence="1">
    <location>
        <begin position="106"/>
        <end position="108"/>
    </location>
</feature>
<protein>
    <recommendedName>
        <fullName evidence="1">UPF0060 membrane protein YnfA</fullName>
    </recommendedName>
</protein>
<dbReference type="EMBL" id="CP001120">
    <property type="protein sequence ID" value="ACF67415.1"/>
    <property type="molecule type" value="Genomic_DNA"/>
</dbReference>
<dbReference type="RefSeq" id="WP_000921389.1">
    <property type="nucleotide sequence ID" value="NC_011083.1"/>
</dbReference>
<dbReference type="SMR" id="B4THT6"/>
<dbReference type="KEGG" id="seh:SeHA_C1674"/>
<dbReference type="HOGENOM" id="CLU_117653_2_1_6"/>
<dbReference type="Proteomes" id="UP000001866">
    <property type="component" value="Chromosome"/>
</dbReference>
<dbReference type="GO" id="GO:0005886">
    <property type="term" value="C:plasma membrane"/>
    <property type="evidence" value="ECO:0007669"/>
    <property type="project" value="UniProtKB-SubCell"/>
</dbReference>
<dbReference type="HAMAP" id="MF_00010">
    <property type="entry name" value="UPF0060"/>
    <property type="match status" value="1"/>
</dbReference>
<dbReference type="InterPro" id="IPR003844">
    <property type="entry name" value="UPF0060"/>
</dbReference>
<dbReference type="NCBIfam" id="NF002586">
    <property type="entry name" value="PRK02237.1"/>
    <property type="match status" value="1"/>
</dbReference>
<dbReference type="PANTHER" id="PTHR36116">
    <property type="entry name" value="UPF0060 MEMBRANE PROTEIN YNFA"/>
    <property type="match status" value="1"/>
</dbReference>
<dbReference type="PANTHER" id="PTHR36116:SF1">
    <property type="entry name" value="UPF0060 MEMBRANE PROTEIN YNFA"/>
    <property type="match status" value="1"/>
</dbReference>
<dbReference type="Pfam" id="PF02694">
    <property type="entry name" value="UPF0060"/>
    <property type="match status" value="1"/>
</dbReference>
<dbReference type="SUPFAM" id="SSF103481">
    <property type="entry name" value="Multidrug resistance efflux transporter EmrE"/>
    <property type="match status" value="1"/>
</dbReference>
<organism>
    <name type="scientific">Salmonella heidelberg (strain SL476)</name>
    <dbReference type="NCBI Taxonomy" id="454169"/>
    <lineage>
        <taxon>Bacteria</taxon>
        <taxon>Pseudomonadati</taxon>
        <taxon>Pseudomonadota</taxon>
        <taxon>Gammaproteobacteria</taxon>
        <taxon>Enterobacterales</taxon>
        <taxon>Enterobacteriaceae</taxon>
        <taxon>Salmonella</taxon>
    </lineage>
</organism>
<reference key="1">
    <citation type="journal article" date="2011" name="J. Bacteriol.">
        <title>Comparative genomics of 28 Salmonella enterica isolates: evidence for CRISPR-mediated adaptive sublineage evolution.</title>
        <authorList>
            <person name="Fricke W.F."/>
            <person name="Mammel M.K."/>
            <person name="McDermott P.F."/>
            <person name="Tartera C."/>
            <person name="White D.G."/>
            <person name="Leclerc J.E."/>
            <person name="Ravel J."/>
            <person name="Cebula T.A."/>
        </authorList>
    </citation>
    <scope>NUCLEOTIDE SEQUENCE [LARGE SCALE GENOMIC DNA]</scope>
    <source>
        <strain>SL476</strain>
    </source>
</reference>